<evidence type="ECO:0000250" key="1"/>
<evidence type="ECO:0000255" key="2">
    <source>
        <dbReference type="PROSITE-ProRule" id="PRU00236"/>
    </source>
</evidence>
<evidence type="ECO:0000256" key="3">
    <source>
        <dbReference type="SAM" id="MobiDB-lite"/>
    </source>
</evidence>
<evidence type="ECO:0000269" key="4">
    <source>
    </source>
</evidence>
<evidence type="ECO:0000269" key="5">
    <source>
    </source>
</evidence>
<evidence type="ECO:0000269" key="6">
    <source>
    </source>
</evidence>
<evidence type="ECO:0000269" key="7">
    <source>
    </source>
</evidence>
<evidence type="ECO:0000269" key="8">
    <source>
    </source>
</evidence>
<evidence type="ECO:0000269" key="9">
    <source>
    </source>
</evidence>
<evidence type="ECO:0000305" key="10"/>
<name>HST4_YEAST</name>
<proteinExistence type="evidence at protein level"/>
<reference key="1">
    <citation type="journal article" date="1997" name="Nature">
        <title>The nucleotide sequence of Saccharomyces cerevisiae chromosome IV.</title>
        <authorList>
            <person name="Jacq C."/>
            <person name="Alt-Moerbe J."/>
            <person name="Andre B."/>
            <person name="Arnold W."/>
            <person name="Bahr A."/>
            <person name="Ballesta J.P.G."/>
            <person name="Bargues M."/>
            <person name="Baron L."/>
            <person name="Becker A."/>
            <person name="Biteau N."/>
            <person name="Bloecker H."/>
            <person name="Blugeon C."/>
            <person name="Boskovic J."/>
            <person name="Brandt P."/>
            <person name="Brueckner M."/>
            <person name="Buitrago M.J."/>
            <person name="Coster F."/>
            <person name="Delaveau T."/>
            <person name="del Rey F."/>
            <person name="Dujon B."/>
            <person name="Eide L.G."/>
            <person name="Garcia-Cantalejo J.M."/>
            <person name="Goffeau A."/>
            <person name="Gomez-Peris A."/>
            <person name="Granotier C."/>
            <person name="Hanemann V."/>
            <person name="Hankeln T."/>
            <person name="Hoheisel J.D."/>
            <person name="Jaeger W."/>
            <person name="Jimenez A."/>
            <person name="Jonniaux J.-L."/>
            <person name="Kraemer C."/>
            <person name="Kuester H."/>
            <person name="Laamanen P."/>
            <person name="Legros Y."/>
            <person name="Louis E.J."/>
            <person name="Moeller-Rieker S."/>
            <person name="Monnet A."/>
            <person name="Moro M."/>
            <person name="Mueller-Auer S."/>
            <person name="Nussbaumer B."/>
            <person name="Paricio N."/>
            <person name="Paulin L."/>
            <person name="Perea J."/>
            <person name="Perez-Alonso M."/>
            <person name="Perez-Ortin J.E."/>
            <person name="Pohl T.M."/>
            <person name="Prydz H."/>
            <person name="Purnelle B."/>
            <person name="Rasmussen S.W."/>
            <person name="Remacha M.A."/>
            <person name="Revuelta J.L."/>
            <person name="Rieger M."/>
            <person name="Salom D."/>
            <person name="Saluz H.P."/>
            <person name="Saiz J.E."/>
            <person name="Saren A.-M."/>
            <person name="Schaefer M."/>
            <person name="Scharfe M."/>
            <person name="Schmidt E.R."/>
            <person name="Schneider C."/>
            <person name="Scholler P."/>
            <person name="Schwarz S."/>
            <person name="Soler-Mira A."/>
            <person name="Urrestarazu L.A."/>
            <person name="Verhasselt P."/>
            <person name="Vissers S."/>
            <person name="Voet M."/>
            <person name="Volckaert G."/>
            <person name="Wagner G."/>
            <person name="Wambutt R."/>
            <person name="Wedler E."/>
            <person name="Wedler H."/>
            <person name="Woelfl S."/>
            <person name="Harris D.E."/>
            <person name="Bowman S."/>
            <person name="Brown D."/>
            <person name="Churcher C.M."/>
            <person name="Connor R."/>
            <person name="Dedman K."/>
            <person name="Gentles S."/>
            <person name="Hamlin N."/>
            <person name="Hunt S."/>
            <person name="Jones L."/>
            <person name="McDonald S."/>
            <person name="Murphy L.D."/>
            <person name="Niblett D."/>
            <person name="Odell C."/>
            <person name="Oliver K."/>
            <person name="Rajandream M.A."/>
            <person name="Richards C."/>
            <person name="Shore L."/>
            <person name="Walsh S.V."/>
            <person name="Barrell B.G."/>
            <person name="Dietrich F.S."/>
            <person name="Mulligan J.T."/>
            <person name="Allen E."/>
            <person name="Araujo R."/>
            <person name="Aviles E."/>
            <person name="Berno A."/>
            <person name="Carpenter J."/>
            <person name="Chen E."/>
            <person name="Cherry J.M."/>
            <person name="Chung E."/>
            <person name="Duncan M."/>
            <person name="Hunicke-Smith S."/>
            <person name="Hyman R.W."/>
            <person name="Komp C."/>
            <person name="Lashkari D."/>
            <person name="Lew H."/>
            <person name="Lin D."/>
            <person name="Mosedale D."/>
            <person name="Nakahara K."/>
            <person name="Namath A."/>
            <person name="Oefner P."/>
            <person name="Oh C."/>
            <person name="Petel F.X."/>
            <person name="Roberts D."/>
            <person name="Schramm S."/>
            <person name="Schroeder M."/>
            <person name="Shogren T."/>
            <person name="Shroff N."/>
            <person name="Winant A."/>
            <person name="Yelton M.A."/>
            <person name="Botstein D."/>
            <person name="Davis R.W."/>
            <person name="Johnston M."/>
            <person name="Andrews S."/>
            <person name="Brinkman R."/>
            <person name="Cooper J."/>
            <person name="Ding H."/>
            <person name="Du Z."/>
            <person name="Favello A."/>
            <person name="Fulton L."/>
            <person name="Gattung S."/>
            <person name="Greco T."/>
            <person name="Hallsworth K."/>
            <person name="Hawkins J."/>
            <person name="Hillier L.W."/>
            <person name="Jier M."/>
            <person name="Johnson D."/>
            <person name="Johnston L."/>
            <person name="Kirsten J."/>
            <person name="Kucaba T."/>
            <person name="Langston Y."/>
            <person name="Latreille P."/>
            <person name="Le T."/>
            <person name="Mardis E."/>
            <person name="Menezes S."/>
            <person name="Miller N."/>
            <person name="Nhan M."/>
            <person name="Pauley A."/>
            <person name="Peluso D."/>
            <person name="Rifkin L."/>
            <person name="Riles L."/>
            <person name="Taich A."/>
            <person name="Trevaskis E."/>
            <person name="Vignati D."/>
            <person name="Wilcox L."/>
            <person name="Wohldman P."/>
            <person name="Vaudin M."/>
            <person name="Wilson R."/>
            <person name="Waterston R."/>
            <person name="Albermann K."/>
            <person name="Hani J."/>
            <person name="Heumann K."/>
            <person name="Kleine K."/>
            <person name="Mewes H.-W."/>
            <person name="Zollner A."/>
            <person name="Zaccaria P."/>
        </authorList>
    </citation>
    <scope>NUCLEOTIDE SEQUENCE [LARGE SCALE GENOMIC DNA]</scope>
    <source>
        <strain>ATCC 204508 / S288c</strain>
    </source>
</reference>
<reference key="2">
    <citation type="journal article" date="2014" name="G3 (Bethesda)">
        <title>The reference genome sequence of Saccharomyces cerevisiae: Then and now.</title>
        <authorList>
            <person name="Engel S.R."/>
            <person name="Dietrich F.S."/>
            <person name="Fisk D.G."/>
            <person name="Binkley G."/>
            <person name="Balakrishnan R."/>
            <person name="Costanzo M.C."/>
            <person name="Dwight S.S."/>
            <person name="Hitz B.C."/>
            <person name="Karra K."/>
            <person name="Nash R.S."/>
            <person name="Weng S."/>
            <person name="Wong E.D."/>
            <person name="Lloyd P."/>
            <person name="Skrzypek M.S."/>
            <person name="Miyasato S.R."/>
            <person name="Simison M."/>
            <person name="Cherry J.M."/>
        </authorList>
    </citation>
    <scope>GENOME REANNOTATION</scope>
    <source>
        <strain>ATCC 204508 / S288c</strain>
    </source>
</reference>
<reference key="3">
    <citation type="journal article" date="2007" name="Genome Res.">
        <title>Approaching a complete repository of sequence-verified protein-encoding clones for Saccharomyces cerevisiae.</title>
        <authorList>
            <person name="Hu Y."/>
            <person name="Rolfs A."/>
            <person name="Bhullar B."/>
            <person name="Murthy T.V.S."/>
            <person name="Zhu C."/>
            <person name="Berger M.F."/>
            <person name="Camargo A.A."/>
            <person name="Kelley F."/>
            <person name="McCarron S."/>
            <person name="Jepson D."/>
            <person name="Richardson A."/>
            <person name="Raphael J."/>
            <person name="Moreira D."/>
            <person name="Taycher E."/>
            <person name="Zuo D."/>
            <person name="Mohr S."/>
            <person name="Kane M.F."/>
            <person name="Williamson J."/>
            <person name="Simpson A.J.G."/>
            <person name="Bulyk M.L."/>
            <person name="Harlow E."/>
            <person name="Marsischky G."/>
            <person name="Kolodner R.D."/>
            <person name="LaBaer J."/>
        </authorList>
    </citation>
    <scope>NUCLEOTIDE SEQUENCE [GENOMIC DNA]</scope>
    <source>
        <strain>ATCC 204508 / S288c</strain>
    </source>
</reference>
<reference key="4">
    <citation type="journal article" date="1996" name="Yeast">
        <title>HST1, a new member of the SIR2 family of genes.</title>
        <authorList>
            <person name="Derbyshire M.K."/>
            <person name="Weinstock K.G."/>
            <person name="Strathern J.N."/>
        </authorList>
    </citation>
    <scope>GENE NAME</scope>
    <source>
        <strain>GRY 668</strain>
    </source>
</reference>
<reference key="5">
    <citation type="journal article" date="1995" name="Genes Dev.">
        <title>The SIR2 gene family, conserved from bacteria to humans, functions in silencing, cell cycle progression, and chromosome stability.</title>
        <authorList>
            <person name="Brachmann C.B."/>
            <person name="Sherman J.M."/>
            <person name="Devine S.E."/>
            <person name="Cameron E.E."/>
            <person name="Pillus L."/>
            <person name="Boeke J.D."/>
        </authorList>
    </citation>
    <scope>CHARACTERIZATION</scope>
</reference>
<reference key="6">
    <citation type="journal article" date="2000" name="Proc. Natl. Acad. Sci. U.S.A.">
        <title>A phylogenetically conserved NAD+-dependent protein deacetylase activity in the Sir2 protein family.</title>
        <authorList>
            <person name="Smith J.S."/>
            <person name="Brachmann C.B."/>
            <person name="Celic I."/>
            <person name="Kenna M.A."/>
            <person name="Muhammad S."/>
            <person name="Starai V.J."/>
            <person name="Avalos J.L."/>
            <person name="Escalante-Semerena J.C."/>
            <person name="Grubmeyer C."/>
            <person name="Wolberger C."/>
            <person name="Boeke J.D."/>
        </authorList>
    </citation>
    <scope>FUNCTION</scope>
</reference>
<reference key="7">
    <citation type="journal article" date="2003" name="Nature">
        <title>Global analysis of protein localization in budding yeast.</title>
        <authorList>
            <person name="Huh W.-K."/>
            <person name="Falvo J.V."/>
            <person name="Gerke L.C."/>
            <person name="Carroll A.S."/>
            <person name="Howson R.W."/>
            <person name="Weissman J.S."/>
            <person name="O'Shea E.K."/>
        </authorList>
    </citation>
    <scope>SUBCELLULAR LOCATION [LARGE SCALE ANALYSIS]</scope>
</reference>
<reference key="8">
    <citation type="journal article" date="2003" name="Nature">
        <title>Global analysis of protein expression in yeast.</title>
        <authorList>
            <person name="Ghaemmaghami S."/>
            <person name="Huh W.-K."/>
            <person name="Bower K."/>
            <person name="Howson R.W."/>
            <person name="Belle A."/>
            <person name="Dephoure N."/>
            <person name="O'Shea E.K."/>
            <person name="Weissman J.S."/>
        </authorList>
    </citation>
    <scope>LEVEL OF PROTEIN EXPRESSION [LARGE SCALE ANALYSIS]</scope>
</reference>
<reference key="9">
    <citation type="journal article" date="2006" name="Cell">
        <title>A DNA integrity network in the yeast Saccharomyces cerevisiae.</title>
        <authorList>
            <person name="Pan X."/>
            <person name="Ye P."/>
            <person name="Yuan D.S."/>
            <person name="Wang X."/>
            <person name="Bader J.S."/>
            <person name="Boeke J.D."/>
        </authorList>
    </citation>
    <scope>FUNCTION</scope>
</reference>
<reference key="10">
    <citation type="journal article" date="2006" name="Cell Cycle">
        <title>Taking it off: regulation of H3 K56 acetylation by Hst3 and Hst4.</title>
        <authorList>
            <person name="Miller K.M."/>
            <person name="Maas N.L."/>
            <person name="Toczyski D.P."/>
        </authorList>
    </citation>
    <scope>FUNCTION</scope>
    <scope>SUBCELLULAR LOCATION</scope>
</reference>
<reference key="11">
    <citation type="journal article" date="2006" name="Curr. Biol.">
        <title>The sirtuins Hst3 and Hst4p preserve genome integrity by controlling histone H3 lysine 56 deacetylation.</title>
        <authorList>
            <person name="Celic I."/>
            <person name="Masumoto H."/>
            <person name="Griffith W.P."/>
            <person name="Meluh P."/>
            <person name="Cotter R.J."/>
            <person name="Boeke J.D."/>
            <person name="Verreault A."/>
        </authorList>
    </citation>
    <scope>FUNCTION</scope>
</reference>
<dbReference type="EC" id="2.3.1.286" evidence="2"/>
<dbReference type="EMBL" id="Z48784">
    <property type="protein sequence ID" value="CAA88705.1"/>
    <property type="molecule type" value="Genomic_DNA"/>
</dbReference>
<dbReference type="EMBL" id="AY557699">
    <property type="protein sequence ID" value="AAS56025.1"/>
    <property type="molecule type" value="Genomic_DNA"/>
</dbReference>
<dbReference type="EMBL" id="BK006938">
    <property type="protein sequence ID" value="DAA12034.1"/>
    <property type="molecule type" value="Genomic_DNA"/>
</dbReference>
<dbReference type="PIR" id="S52699">
    <property type="entry name" value="S52699"/>
</dbReference>
<dbReference type="RefSeq" id="NP_010477.3">
    <property type="nucleotide sequence ID" value="NM_001180499.3"/>
</dbReference>
<dbReference type="SMR" id="P53688"/>
<dbReference type="BioGRID" id="32244">
    <property type="interactions" value="108"/>
</dbReference>
<dbReference type="FunCoup" id="P53688">
    <property type="interactions" value="115"/>
</dbReference>
<dbReference type="IntAct" id="P53688">
    <property type="interactions" value="4"/>
</dbReference>
<dbReference type="STRING" id="4932.YDR191W"/>
<dbReference type="GlyGen" id="P53688">
    <property type="glycosylation" value="1 site"/>
</dbReference>
<dbReference type="PaxDb" id="4932-YDR191W"/>
<dbReference type="PeptideAtlas" id="P53688"/>
<dbReference type="EnsemblFungi" id="YDR191W_mRNA">
    <property type="protein sequence ID" value="YDR191W"/>
    <property type="gene ID" value="YDR191W"/>
</dbReference>
<dbReference type="GeneID" id="851772"/>
<dbReference type="KEGG" id="sce:YDR191W"/>
<dbReference type="AGR" id="SGD:S000002599"/>
<dbReference type="SGD" id="S000002599">
    <property type="gene designation" value="HST4"/>
</dbReference>
<dbReference type="VEuPathDB" id="FungiDB:YDR191W"/>
<dbReference type="eggNOG" id="KOG2684">
    <property type="taxonomic scope" value="Eukaryota"/>
</dbReference>
<dbReference type="HOGENOM" id="CLU_021544_1_2_1"/>
<dbReference type="InParanoid" id="P53688"/>
<dbReference type="OMA" id="QLHGSIN"/>
<dbReference type="OrthoDB" id="2919105at2759"/>
<dbReference type="BioCyc" id="YEAST:G3O-29779-MONOMER"/>
<dbReference type="BioGRID-ORCS" id="851772">
    <property type="hits" value="2 hits in 10 CRISPR screens"/>
</dbReference>
<dbReference type="PRO" id="PR:P53688"/>
<dbReference type="Proteomes" id="UP000002311">
    <property type="component" value="Chromosome IV"/>
</dbReference>
<dbReference type="RNAct" id="P53688">
    <property type="molecule type" value="protein"/>
</dbReference>
<dbReference type="GO" id="GO:0000781">
    <property type="term" value="C:chromosome, telomeric region"/>
    <property type="evidence" value="ECO:0007669"/>
    <property type="project" value="GOC"/>
</dbReference>
<dbReference type="GO" id="GO:0005737">
    <property type="term" value="C:cytoplasm"/>
    <property type="evidence" value="ECO:0000314"/>
    <property type="project" value="SGD"/>
</dbReference>
<dbReference type="GO" id="GO:0031934">
    <property type="term" value="C:mating-type region heterochromatin"/>
    <property type="evidence" value="ECO:0000318"/>
    <property type="project" value="GO_Central"/>
</dbReference>
<dbReference type="GO" id="GO:0005739">
    <property type="term" value="C:mitochondrion"/>
    <property type="evidence" value="ECO:0000314"/>
    <property type="project" value="SGD"/>
</dbReference>
<dbReference type="GO" id="GO:0005634">
    <property type="term" value="C:nucleus"/>
    <property type="evidence" value="ECO:0000314"/>
    <property type="project" value="SGD"/>
</dbReference>
<dbReference type="GO" id="GO:0017136">
    <property type="term" value="F:histone deacetylase activity, NAD-dependent"/>
    <property type="evidence" value="ECO:0000314"/>
    <property type="project" value="SGD"/>
</dbReference>
<dbReference type="GO" id="GO:0046872">
    <property type="term" value="F:metal ion binding"/>
    <property type="evidence" value="ECO:0007669"/>
    <property type="project" value="UniProtKB-KW"/>
</dbReference>
<dbReference type="GO" id="GO:0070403">
    <property type="term" value="F:NAD+ binding"/>
    <property type="evidence" value="ECO:0000318"/>
    <property type="project" value="GO_Central"/>
</dbReference>
<dbReference type="GO" id="GO:0006351">
    <property type="term" value="P:DNA-templated transcription"/>
    <property type="evidence" value="ECO:0000314"/>
    <property type="project" value="SGD"/>
</dbReference>
<dbReference type="GO" id="GO:0009299">
    <property type="term" value="P:mRNA transcription"/>
    <property type="evidence" value="ECO:0000314"/>
    <property type="project" value="SGD"/>
</dbReference>
<dbReference type="GO" id="GO:0000122">
    <property type="term" value="P:negative regulation of transcription by RNA polymerase II"/>
    <property type="evidence" value="ECO:0000318"/>
    <property type="project" value="GO_Central"/>
</dbReference>
<dbReference type="GO" id="GO:0031508">
    <property type="term" value="P:pericentric heterochromatin formation"/>
    <property type="evidence" value="ECO:0000318"/>
    <property type="project" value="GO_Central"/>
</dbReference>
<dbReference type="GO" id="GO:0000183">
    <property type="term" value="P:rDNA heterochromatin formation"/>
    <property type="evidence" value="ECO:0000318"/>
    <property type="project" value="GO_Central"/>
</dbReference>
<dbReference type="GO" id="GO:1990414">
    <property type="term" value="P:replication-born double-strand break repair via sister chromatid exchange"/>
    <property type="evidence" value="ECO:0000315"/>
    <property type="project" value="SGD"/>
</dbReference>
<dbReference type="GO" id="GO:0046459">
    <property type="term" value="P:short-chain fatty acid metabolic process"/>
    <property type="evidence" value="ECO:0000315"/>
    <property type="project" value="SGD"/>
</dbReference>
<dbReference type="GO" id="GO:0031509">
    <property type="term" value="P:subtelomeric heterochromatin formation"/>
    <property type="evidence" value="ECO:0000316"/>
    <property type="project" value="SGD"/>
</dbReference>
<dbReference type="Gene3D" id="3.30.1600.10">
    <property type="entry name" value="SIR2/SIRT2 'Small Domain"/>
    <property type="match status" value="1"/>
</dbReference>
<dbReference type="Gene3D" id="3.40.50.1220">
    <property type="entry name" value="TPP-binding domain"/>
    <property type="match status" value="1"/>
</dbReference>
<dbReference type="InterPro" id="IPR029035">
    <property type="entry name" value="DHS-like_NAD/FAD-binding_dom"/>
</dbReference>
<dbReference type="InterPro" id="IPR050134">
    <property type="entry name" value="NAD-dep_sirtuin_deacylases"/>
</dbReference>
<dbReference type="InterPro" id="IPR003000">
    <property type="entry name" value="Sirtuin"/>
</dbReference>
<dbReference type="InterPro" id="IPR026591">
    <property type="entry name" value="Sirtuin_cat_small_dom_sf"/>
</dbReference>
<dbReference type="InterPro" id="IPR026590">
    <property type="entry name" value="Ssirtuin_cat_dom"/>
</dbReference>
<dbReference type="PANTHER" id="PTHR11085:SF15">
    <property type="entry name" value="NAD-DEPENDENT HISTONE DEACETYLASE HST4"/>
    <property type="match status" value="1"/>
</dbReference>
<dbReference type="PANTHER" id="PTHR11085">
    <property type="entry name" value="NAD-DEPENDENT PROTEIN DEACYLASE SIRTUIN-5, MITOCHONDRIAL-RELATED"/>
    <property type="match status" value="1"/>
</dbReference>
<dbReference type="Pfam" id="PF02146">
    <property type="entry name" value="SIR2"/>
    <property type="match status" value="1"/>
</dbReference>
<dbReference type="SUPFAM" id="SSF52467">
    <property type="entry name" value="DHS-like NAD/FAD-binding domain"/>
    <property type="match status" value="1"/>
</dbReference>
<dbReference type="PROSITE" id="PS50305">
    <property type="entry name" value="SIRTUIN"/>
    <property type="match status" value="1"/>
</dbReference>
<sequence length="370" mass="41765">MKQKFVLPITPPSTAEKKPQTENRCNENLKPRRLLPQLKKSVRNRKPRLSYRPELNSVFDLDAYVDSTHLSKSQRHHMDRDAGFISYALNYSKRMVVVSGAGISVAAGIPDFRSSEGIFSTVNGGSGKDLFDYNRVYGDESMSLKFNQLMVSLFRLSKNCQPTKFHEMLNEFARDGRLLRLYTQNIDGLDTQLPHLSTNVPLAKPIPSTVQLHGSIKHMECNKCLNIKPFDPELFKCDDKFDSRTEIIPSCPQCEEYETVRKMAGLRSTGVGKLRPRVILYNEVHPEGDFIGEIANNDLKKRIDCLIIVGTSLKIPGVKNICRQFAAKVHANRGIVLYLNTSMPPKNVLDSLKFVDLVVLGDCQHVTSLL</sequence>
<protein>
    <recommendedName>
        <fullName>NAD-dependent histone deacetylase HST4</fullName>
        <ecNumber evidence="2">2.3.1.286</ecNumber>
    </recommendedName>
    <alternativeName>
        <fullName>Homologous to SIR2 protein 4</fullName>
    </alternativeName>
    <alternativeName>
        <fullName>Regulatory protein SIR2 homolog 4</fullName>
    </alternativeName>
</protein>
<organism>
    <name type="scientific">Saccharomyces cerevisiae (strain ATCC 204508 / S288c)</name>
    <name type="common">Baker's yeast</name>
    <dbReference type="NCBI Taxonomy" id="559292"/>
    <lineage>
        <taxon>Eukaryota</taxon>
        <taxon>Fungi</taxon>
        <taxon>Dikarya</taxon>
        <taxon>Ascomycota</taxon>
        <taxon>Saccharomycotina</taxon>
        <taxon>Saccharomycetes</taxon>
        <taxon>Saccharomycetales</taxon>
        <taxon>Saccharomycetaceae</taxon>
        <taxon>Saccharomyces</taxon>
    </lineage>
</organism>
<feature type="chain" id="PRO_0000110284" description="NAD-dependent histone deacetylase HST4">
    <location>
        <begin position="1"/>
        <end position="370"/>
    </location>
</feature>
<feature type="domain" description="Deacetylase sirtuin-type" evidence="2">
    <location>
        <begin position="75"/>
        <end position="370"/>
    </location>
</feature>
<feature type="region of interest" description="Disordered" evidence="3">
    <location>
        <begin position="1"/>
        <end position="27"/>
    </location>
</feature>
<feature type="compositionally biased region" description="Basic and acidic residues" evidence="3">
    <location>
        <begin position="15"/>
        <end position="27"/>
    </location>
</feature>
<feature type="active site" description="Proton acceptor" evidence="2">
    <location>
        <position position="213"/>
    </location>
</feature>
<feature type="binding site" evidence="1">
    <location>
        <begin position="100"/>
        <end position="119"/>
    </location>
    <ligand>
        <name>NAD(+)</name>
        <dbReference type="ChEBI" id="CHEBI:57540"/>
    </ligand>
</feature>
<feature type="binding site" evidence="1">
    <location>
        <begin position="184"/>
        <end position="187"/>
    </location>
    <ligand>
        <name>NAD(+)</name>
        <dbReference type="ChEBI" id="CHEBI:57540"/>
    </ligand>
</feature>
<feature type="binding site" evidence="2">
    <location>
        <position position="221"/>
    </location>
    <ligand>
        <name>Zn(2+)</name>
        <dbReference type="ChEBI" id="CHEBI:29105"/>
    </ligand>
</feature>
<feature type="binding site" evidence="2">
    <location>
        <position position="224"/>
    </location>
    <ligand>
        <name>Zn(2+)</name>
        <dbReference type="ChEBI" id="CHEBI:29105"/>
    </ligand>
</feature>
<feature type="binding site" evidence="2">
    <location>
        <position position="251"/>
    </location>
    <ligand>
        <name>Zn(2+)</name>
        <dbReference type="ChEBI" id="CHEBI:29105"/>
    </ligand>
</feature>
<feature type="binding site" evidence="2">
    <location>
        <position position="254"/>
    </location>
    <ligand>
        <name>Zn(2+)</name>
        <dbReference type="ChEBI" id="CHEBI:29105"/>
    </ligand>
</feature>
<feature type="binding site" evidence="1">
    <location>
        <begin position="310"/>
        <end position="312"/>
    </location>
    <ligand>
        <name>NAD(+)</name>
        <dbReference type="ChEBI" id="CHEBI:57540"/>
    </ligand>
</feature>
<feature type="binding site" evidence="1">
    <location>
        <begin position="340"/>
        <end position="342"/>
    </location>
    <ligand>
        <name>NAD(+)</name>
        <dbReference type="ChEBI" id="CHEBI:57540"/>
    </ligand>
</feature>
<feature type="binding site" evidence="1">
    <location>
        <position position="363"/>
    </location>
    <ligand>
        <name>NAD(+)</name>
        <dbReference type="ChEBI" id="CHEBI:57540"/>
    </ligand>
</feature>
<comment type="function">
    <text evidence="4 7 8 9">NAD-dependent histone deacetylase, which contributes together with HST3 to histone H3 'Lys-56' deacetylation, regulation of telomeric silencing, proper cell cycle progression, DNA damage control, DNA recombination, and genomic maintenance.</text>
</comment>
<comment type="catalytic activity">
    <reaction evidence="2">
        <text>N(6)-acetyl-L-lysyl-[protein] + NAD(+) + H2O = 2''-O-acetyl-ADP-D-ribose + nicotinamide + L-lysyl-[protein]</text>
        <dbReference type="Rhea" id="RHEA:43636"/>
        <dbReference type="Rhea" id="RHEA-COMP:9752"/>
        <dbReference type="Rhea" id="RHEA-COMP:10731"/>
        <dbReference type="ChEBI" id="CHEBI:15377"/>
        <dbReference type="ChEBI" id="CHEBI:17154"/>
        <dbReference type="ChEBI" id="CHEBI:29969"/>
        <dbReference type="ChEBI" id="CHEBI:57540"/>
        <dbReference type="ChEBI" id="CHEBI:61930"/>
        <dbReference type="ChEBI" id="CHEBI:83767"/>
        <dbReference type="EC" id="2.3.1.286"/>
    </reaction>
</comment>
<comment type="cofactor">
    <cofactor evidence="1">
        <name>Zn(2+)</name>
        <dbReference type="ChEBI" id="CHEBI:29105"/>
    </cofactor>
    <text evidence="1">Binds 1 zinc ion per subunit.</text>
</comment>
<comment type="subcellular location">
    <subcellularLocation>
        <location evidence="5 9">Nucleus</location>
    </subcellularLocation>
</comment>
<comment type="miscellaneous">
    <text evidence="6">Present with 377 molecules/cell in log phase SD medium.</text>
</comment>
<comment type="similarity">
    <text evidence="10">Belongs to the sirtuin family. Class I subfamily.</text>
</comment>
<accession>P53688</accession>
<accession>D6VSH4</accession>
<keyword id="KW-0479">Metal-binding</keyword>
<keyword id="KW-0520">NAD</keyword>
<keyword id="KW-0539">Nucleus</keyword>
<keyword id="KW-1185">Reference proteome</keyword>
<keyword id="KW-0678">Repressor</keyword>
<keyword id="KW-0804">Transcription</keyword>
<keyword id="KW-0805">Transcription regulation</keyword>
<keyword id="KW-0808">Transferase</keyword>
<keyword id="KW-0862">Zinc</keyword>
<gene>
    <name type="primary">HST4</name>
    <name type="ordered locus">YDR191W</name>
    <name type="ORF">YD9346.03</name>
</gene>